<name>TRPA_STAAN</name>
<proteinExistence type="inferred from homology"/>
<comment type="function">
    <text evidence="1">The alpha subunit is responsible for the aldol cleavage of indoleglycerol phosphate to indole and glyceraldehyde 3-phosphate.</text>
</comment>
<comment type="catalytic activity">
    <reaction evidence="1">
        <text>(1S,2R)-1-C-(indol-3-yl)glycerol 3-phosphate + L-serine = D-glyceraldehyde 3-phosphate + L-tryptophan + H2O</text>
        <dbReference type="Rhea" id="RHEA:10532"/>
        <dbReference type="ChEBI" id="CHEBI:15377"/>
        <dbReference type="ChEBI" id="CHEBI:33384"/>
        <dbReference type="ChEBI" id="CHEBI:57912"/>
        <dbReference type="ChEBI" id="CHEBI:58866"/>
        <dbReference type="ChEBI" id="CHEBI:59776"/>
        <dbReference type="EC" id="4.2.1.20"/>
    </reaction>
</comment>
<comment type="pathway">
    <text evidence="1">Amino-acid biosynthesis; L-tryptophan biosynthesis; L-tryptophan from chorismate: step 5/5.</text>
</comment>
<comment type="subunit">
    <text evidence="1">Tetramer of two alpha and two beta chains.</text>
</comment>
<comment type="similarity">
    <text evidence="1">Belongs to the TrpA family.</text>
</comment>
<organism>
    <name type="scientific">Staphylococcus aureus (strain N315)</name>
    <dbReference type="NCBI Taxonomy" id="158879"/>
    <lineage>
        <taxon>Bacteria</taxon>
        <taxon>Bacillati</taxon>
        <taxon>Bacillota</taxon>
        <taxon>Bacilli</taxon>
        <taxon>Bacillales</taxon>
        <taxon>Staphylococcaceae</taxon>
        <taxon>Staphylococcus</taxon>
    </lineage>
</organism>
<keyword id="KW-0028">Amino-acid biosynthesis</keyword>
<keyword id="KW-0057">Aromatic amino acid biosynthesis</keyword>
<keyword id="KW-0456">Lyase</keyword>
<keyword id="KW-0822">Tryptophan biosynthesis</keyword>
<dbReference type="EC" id="4.2.1.20" evidence="1"/>
<dbReference type="EMBL" id="BA000018">
    <property type="protein sequence ID" value="BAB42465.1"/>
    <property type="molecule type" value="Genomic_DNA"/>
</dbReference>
<dbReference type="PIR" id="E89913">
    <property type="entry name" value="E89913"/>
</dbReference>
<dbReference type="RefSeq" id="WP_000163628.1">
    <property type="nucleotide sequence ID" value="NC_002745.2"/>
</dbReference>
<dbReference type="SMR" id="P66983"/>
<dbReference type="EnsemblBacteria" id="BAB42465">
    <property type="protein sequence ID" value="BAB42465"/>
    <property type="gene ID" value="BAB42465"/>
</dbReference>
<dbReference type="KEGG" id="sau:SA1205"/>
<dbReference type="HOGENOM" id="CLU_016734_0_0_9"/>
<dbReference type="UniPathway" id="UPA00035">
    <property type="reaction ID" value="UER00044"/>
</dbReference>
<dbReference type="GO" id="GO:0005829">
    <property type="term" value="C:cytosol"/>
    <property type="evidence" value="ECO:0007669"/>
    <property type="project" value="TreeGrafter"/>
</dbReference>
<dbReference type="GO" id="GO:0004834">
    <property type="term" value="F:tryptophan synthase activity"/>
    <property type="evidence" value="ECO:0007669"/>
    <property type="project" value="UniProtKB-UniRule"/>
</dbReference>
<dbReference type="CDD" id="cd04724">
    <property type="entry name" value="Tryptophan_synthase_alpha"/>
    <property type="match status" value="1"/>
</dbReference>
<dbReference type="Gene3D" id="3.20.20.70">
    <property type="entry name" value="Aldolase class I"/>
    <property type="match status" value="1"/>
</dbReference>
<dbReference type="HAMAP" id="MF_00131">
    <property type="entry name" value="Trp_synth_alpha"/>
    <property type="match status" value="1"/>
</dbReference>
<dbReference type="InterPro" id="IPR013785">
    <property type="entry name" value="Aldolase_TIM"/>
</dbReference>
<dbReference type="InterPro" id="IPR011060">
    <property type="entry name" value="RibuloseP-bd_barrel"/>
</dbReference>
<dbReference type="InterPro" id="IPR018204">
    <property type="entry name" value="Trp_synthase_alpha_AS"/>
</dbReference>
<dbReference type="InterPro" id="IPR002028">
    <property type="entry name" value="Trp_synthase_suA"/>
</dbReference>
<dbReference type="NCBIfam" id="TIGR00262">
    <property type="entry name" value="trpA"/>
    <property type="match status" value="1"/>
</dbReference>
<dbReference type="PANTHER" id="PTHR43406:SF1">
    <property type="entry name" value="TRYPTOPHAN SYNTHASE ALPHA CHAIN, CHLOROPLASTIC"/>
    <property type="match status" value="1"/>
</dbReference>
<dbReference type="PANTHER" id="PTHR43406">
    <property type="entry name" value="TRYPTOPHAN SYNTHASE, ALPHA CHAIN"/>
    <property type="match status" value="1"/>
</dbReference>
<dbReference type="Pfam" id="PF00290">
    <property type="entry name" value="Trp_syntA"/>
    <property type="match status" value="1"/>
</dbReference>
<dbReference type="SUPFAM" id="SSF51366">
    <property type="entry name" value="Ribulose-phoshate binding barrel"/>
    <property type="match status" value="1"/>
</dbReference>
<dbReference type="PROSITE" id="PS00167">
    <property type="entry name" value="TRP_SYNTHASE_ALPHA"/>
    <property type="match status" value="1"/>
</dbReference>
<protein>
    <recommendedName>
        <fullName evidence="1">Tryptophan synthase alpha chain</fullName>
        <ecNumber evidence="1">4.2.1.20</ecNumber>
    </recommendedName>
</protein>
<accession>P66983</accession>
<accession>Q99UA8</accession>
<evidence type="ECO:0000255" key="1">
    <source>
        <dbReference type="HAMAP-Rule" id="MF_00131"/>
    </source>
</evidence>
<sequence length="242" mass="27145">MTKLFIPYIMGNKDLIENATLLSENGADIIEIGVPFSDPVADGPVIMEAGQQAIKQGITIDYIFNQLEKHGDQIKCNYVLMTYYNIICHYGEQAFFEKCRDTGVYGLIIPDLPYELSQRLKQQFSHYGVKIISLVAMTTDDKRIKDIVSHAEGFIYTVTMNATTGQNGAFHPELKRKIESIKAIANVPVVAGFGIRTPQHVADIKEVADGIVIGSEIVKRFKSNTREEIIRYLQSIQQTLNN</sequence>
<feature type="chain" id="PRO_0000098845" description="Tryptophan synthase alpha chain">
    <location>
        <begin position="1"/>
        <end position="242"/>
    </location>
</feature>
<feature type="active site" description="Proton acceptor" evidence="1">
    <location>
        <position position="31"/>
    </location>
</feature>
<feature type="active site" description="Proton acceptor" evidence="1">
    <location>
        <position position="42"/>
    </location>
</feature>
<gene>
    <name evidence="1" type="primary">trpA</name>
    <name type="ordered locus">SA1205</name>
</gene>
<reference key="1">
    <citation type="journal article" date="2001" name="Lancet">
        <title>Whole genome sequencing of meticillin-resistant Staphylococcus aureus.</title>
        <authorList>
            <person name="Kuroda M."/>
            <person name="Ohta T."/>
            <person name="Uchiyama I."/>
            <person name="Baba T."/>
            <person name="Yuzawa H."/>
            <person name="Kobayashi I."/>
            <person name="Cui L."/>
            <person name="Oguchi A."/>
            <person name="Aoki K."/>
            <person name="Nagai Y."/>
            <person name="Lian J.-Q."/>
            <person name="Ito T."/>
            <person name="Kanamori M."/>
            <person name="Matsumaru H."/>
            <person name="Maruyama A."/>
            <person name="Murakami H."/>
            <person name="Hosoyama A."/>
            <person name="Mizutani-Ui Y."/>
            <person name="Takahashi N.K."/>
            <person name="Sawano T."/>
            <person name="Inoue R."/>
            <person name="Kaito C."/>
            <person name="Sekimizu K."/>
            <person name="Hirakawa H."/>
            <person name="Kuhara S."/>
            <person name="Goto S."/>
            <person name="Yabuzaki J."/>
            <person name="Kanehisa M."/>
            <person name="Yamashita A."/>
            <person name="Oshima K."/>
            <person name="Furuya K."/>
            <person name="Yoshino C."/>
            <person name="Shiba T."/>
            <person name="Hattori M."/>
            <person name="Ogasawara N."/>
            <person name="Hayashi H."/>
            <person name="Hiramatsu K."/>
        </authorList>
    </citation>
    <scope>NUCLEOTIDE SEQUENCE [LARGE SCALE GENOMIC DNA]</scope>
    <source>
        <strain>N315</strain>
    </source>
</reference>